<keyword id="KW-0963">Cytoplasm</keyword>
<keyword id="KW-0251">Elongation factor</keyword>
<keyword id="KW-0342">GTP-binding</keyword>
<keyword id="KW-0547">Nucleotide-binding</keyword>
<keyword id="KW-0648">Protein biosynthesis</keyword>
<keyword id="KW-1185">Reference proteome</keyword>
<evidence type="ECO:0000255" key="1">
    <source>
        <dbReference type="HAMAP-Rule" id="MF_00054"/>
    </source>
</evidence>
<gene>
    <name evidence="1" type="primary">fusA</name>
    <name type="ordered locus">SSP2208</name>
</gene>
<name>EFG_STAS1</name>
<feature type="chain" id="PRO_0000225242" description="Elongation factor G">
    <location>
        <begin position="1"/>
        <end position="696"/>
    </location>
</feature>
<feature type="domain" description="tr-type G">
    <location>
        <begin position="8"/>
        <end position="282"/>
    </location>
</feature>
<feature type="binding site" evidence="1">
    <location>
        <begin position="17"/>
        <end position="24"/>
    </location>
    <ligand>
        <name>GTP</name>
        <dbReference type="ChEBI" id="CHEBI:37565"/>
    </ligand>
</feature>
<feature type="binding site" evidence="1">
    <location>
        <begin position="81"/>
        <end position="85"/>
    </location>
    <ligand>
        <name>GTP</name>
        <dbReference type="ChEBI" id="CHEBI:37565"/>
    </ligand>
</feature>
<feature type="binding site" evidence="1">
    <location>
        <begin position="135"/>
        <end position="138"/>
    </location>
    <ligand>
        <name>GTP</name>
        <dbReference type="ChEBI" id="CHEBI:37565"/>
    </ligand>
</feature>
<protein>
    <recommendedName>
        <fullName evidence="1">Elongation factor G</fullName>
        <shortName evidence="1">EF-G</shortName>
    </recommendedName>
</protein>
<dbReference type="EMBL" id="AP008934">
    <property type="protein sequence ID" value="BAE19353.1"/>
    <property type="molecule type" value="Genomic_DNA"/>
</dbReference>
<dbReference type="RefSeq" id="WP_011303836.1">
    <property type="nucleotide sequence ID" value="NZ_MTGA01000039.1"/>
</dbReference>
<dbReference type="SMR" id="Q49V57"/>
<dbReference type="GeneID" id="3615538"/>
<dbReference type="KEGG" id="ssp:SSP2208"/>
<dbReference type="PATRIC" id="fig|342451.11.peg.2199"/>
<dbReference type="eggNOG" id="COG0480">
    <property type="taxonomic scope" value="Bacteria"/>
</dbReference>
<dbReference type="HOGENOM" id="CLU_002794_4_1_9"/>
<dbReference type="OrthoDB" id="9804431at2"/>
<dbReference type="Proteomes" id="UP000006371">
    <property type="component" value="Chromosome"/>
</dbReference>
<dbReference type="GO" id="GO:0005737">
    <property type="term" value="C:cytoplasm"/>
    <property type="evidence" value="ECO:0007669"/>
    <property type="project" value="UniProtKB-SubCell"/>
</dbReference>
<dbReference type="GO" id="GO:0005525">
    <property type="term" value="F:GTP binding"/>
    <property type="evidence" value="ECO:0007669"/>
    <property type="project" value="UniProtKB-UniRule"/>
</dbReference>
<dbReference type="GO" id="GO:0003924">
    <property type="term" value="F:GTPase activity"/>
    <property type="evidence" value="ECO:0007669"/>
    <property type="project" value="InterPro"/>
</dbReference>
<dbReference type="GO" id="GO:0003746">
    <property type="term" value="F:translation elongation factor activity"/>
    <property type="evidence" value="ECO:0007669"/>
    <property type="project" value="UniProtKB-UniRule"/>
</dbReference>
<dbReference type="GO" id="GO:0032790">
    <property type="term" value="P:ribosome disassembly"/>
    <property type="evidence" value="ECO:0007669"/>
    <property type="project" value="TreeGrafter"/>
</dbReference>
<dbReference type="CDD" id="cd01886">
    <property type="entry name" value="EF-G"/>
    <property type="match status" value="1"/>
</dbReference>
<dbReference type="CDD" id="cd16262">
    <property type="entry name" value="EFG_III"/>
    <property type="match status" value="1"/>
</dbReference>
<dbReference type="CDD" id="cd01434">
    <property type="entry name" value="EFG_mtEFG1_IV"/>
    <property type="match status" value="1"/>
</dbReference>
<dbReference type="CDD" id="cd03713">
    <property type="entry name" value="EFG_mtEFG_C"/>
    <property type="match status" value="1"/>
</dbReference>
<dbReference type="CDD" id="cd04088">
    <property type="entry name" value="EFG_mtEFG_II"/>
    <property type="match status" value="1"/>
</dbReference>
<dbReference type="FunFam" id="2.40.30.10:FF:000006">
    <property type="entry name" value="Elongation factor G"/>
    <property type="match status" value="1"/>
</dbReference>
<dbReference type="FunFam" id="3.30.230.10:FF:000003">
    <property type="entry name" value="Elongation factor G"/>
    <property type="match status" value="1"/>
</dbReference>
<dbReference type="FunFam" id="3.30.70.240:FF:000001">
    <property type="entry name" value="Elongation factor G"/>
    <property type="match status" value="1"/>
</dbReference>
<dbReference type="FunFam" id="3.30.70.870:FF:000001">
    <property type="entry name" value="Elongation factor G"/>
    <property type="match status" value="1"/>
</dbReference>
<dbReference type="FunFam" id="3.40.50.300:FF:000029">
    <property type="entry name" value="Elongation factor G"/>
    <property type="match status" value="1"/>
</dbReference>
<dbReference type="Gene3D" id="3.30.230.10">
    <property type="match status" value="1"/>
</dbReference>
<dbReference type="Gene3D" id="3.30.70.240">
    <property type="match status" value="1"/>
</dbReference>
<dbReference type="Gene3D" id="3.30.70.870">
    <property type="entry name" value="Elongation Factor G (Translational Gtpase), domain 3"/>
    <property type="match status" value="1"/>
</dbReference>
<dbReference type="Gene3D" id="3.40.50.300">
    <property type="entry name" value="P-loop containing nucleotide triphosphate hydrolases"/>
    <property type="match status" value="1"/>
</dbReference>
<dbReference type="Gene3D" id="2.40.30.10">
    <property type="entry name" value="Translation factors"/>
    <property type="match status" value="1"/>
</dbReference>
<dbReference type="HAMAP" id="MF_00054_B">
    <property type="entry name" value="EF_G_EF_2_B"/>
    <property type="match status" value="1"/>
</dbReference>
<dbReference type="InterPro" id="IPR041095">
    <property type="entry name" value="EFG_II"/>
</dbReference>
<dbReference type="InterPro" id="IPR009022">
    <property type="entry name" value="EFG_III"/>
</dbReference>
<dbReference type="InterPro" id="IPR035647">
    <property type="entry name" value="EFG_III/V"/>
</dbReference>
<dbReference type="InterPro" id="IPR047872">
    <property type="entry name" value="EFG_IV"/>
</dbReference>
<dbReference type="InterPro" id="IPR035649">
    <property type="entry name" value="EFG_V"/>
</dbReference>
<dbReference type="InterPro" id="IPR000640">
    <property type="entry name" value="EFG_V-like"/>
</dbReference>
<dbReference type="InterPro" id="IPR004161">
    <property type="entry name" value="EFTu-like_2"/>
</dbReference>
<dbReference type="InterPro" id="IPR031157">
    <property type="entry name" value="G_TR_CS"/>
</dbReference>
<dbReference type="InterPro" id="IPR027417">
    <property type="entry name" value="P-loop_NTPase"/>
</dbReference>
<dbReference type="InterPro" id="IPR020568">
    <property type="entry name" value="Ribosomal_Su5_D2-typ_SF"/>
</dbReference>
<dbReference type="InterPro" id="IPR014721">
    <property type="entry name" value="Ribsml_uS5_D2-typ_fold_subgr"/>
</dbReference>
<dbReference type="InterPro" id="IPR005225">
    <property type="entry name" value="Small_GTP-bd"/>
</dbReference>
<dbReference type="InterPro" id="IPR000795">
    <property type="entry name" value="T_Tr_GTP-bd_dom"/>
</dbReference>
<dbReference type="InterPro" id="IPR009000">
    <property type="entry name" value="Transl_B-barrel_sf"/>
</dbReference>
<dbReference type="InterPro" id="IPR004540">
    <property type="entry name" value="Transl_elong_EFG/EF2"/>
</dbReference>
<dbReference type="InterPro" id="IPR005517">
    <property type="entry name" value="Transl_elong_EFG/EF2_IV"/>
</dbReference>
<dbReference type="NCBIfam" id="TIGR00484">
    <property type="entry name" value="EF-G"/>
    <property type="match status" value="1"/>
</dbReference>
<dbReference type="NCBIfam" id="NF009379">
    <property type="entry name" value="PRK12740.1-3"/>
    <property type="match status" value="1"/>
</dbReference>
<dbReference type="NCBIfam" id="NF009381">
    <property type="entry name" value="PRK12740.1-5"/>
    <property type="match status" value="1"/>
</dbReference>
<dbReference type="NCBIfam" id="TIGR00231">
    <property type="entry name" value="small_GTP"/>
    <property type="match status" value="1"/>
</dbReference>
<dbReference type="PANTHER" id="PTHR43261:SF1">
    <property type="entry name" value="RIBOSOME-RELEASING FACTOR 2, MITOCHONDRIAL"/>
    <property type="match status" value="1"/>
</dbReference>
<dbReference type="PANTHER" id="PTHR43261">
    <property type="entry name" value="TRANSLATION ELONGATION FACTOR G-RELATED"/>
    <property type="match status" value="1"/>
</dbReference>
<dbReference type="Pfam" id="PF00679">
    <property type="entry name" value="EFG_C"/>
    <property type="match status" value="1"/>
</dbReference>
<dbReference type="Pfam" id="PF14492">
    <property type="entry name" value="EFG_III"/>
    <property type="match status" value="1"/>
</dbReference>
<dbReference type="Pfam" id="PF03764">
    <property type="entry name" value="EFG_IV"/>
    <property type="match status" value="1"/>
</dbReference>
<dbReference type="Pfam" id="PF00009">
    <property type="entry name" value="GTP_EFTU"/>
    <property type="match status" value="1"/>
</dbReference>
<dbReference type="Pfam" id="PF03144">
    <property type="entry name" value="GTP_EFTU_D2"/>
    <property type="match status" value="1"/>
</dbReference>
<dbReference type="PRINTS" id="PR00315">
    <property type="entry name" value="ELONGATNFCT"/>
</dbReference>
<dbReference type="SMART" id="SM00838">
    <property type="entry name" value="EFG_C"/>
    <property type="match status" value="1"/>
</dbReference>
<dbReference type="SMART" id="SM00889">
    <property type="entry name" value="EFG_IV"/>
    <property type="match status" value="1"/>
</dbReference>
<dbReference type="SUPFAM" id="SSF54980">
    <property type="entry name" value="EF-G C-terminal domain-like"/>
    <property type="match status" value="2"/>
</dbReference>
<dbReference type="SUPFAM" id="SSF52540">
    <property type="entry name" value="P-loop containing nucleoside triphosphate hydrolases"/>
    <property type="match status" value="1"/>
</dbReference>
<dbReference type="SUPFAM" id="SSF54211">
    <property type="entry name" value="Ribosomal protein S5 domain 2-like"/>
    <property type="match status" value="1"/>
</dbReference>
<dbReference type="SUPFAM" id="SSF50447">
    <property type="entry name" value="Translation proteins"/>
    <property type="match status" value="1"/>
</dbReference>
<dbReference type="PROSITE" id="PS00301">
    <property type="entry name" value="G_TR_1"/>
    <property type="match status" value="1"/>
</dbReference>
<dbReference type="PROSITE" id="PS51722">
    <property type="entry name" value="G_TR_2"/>
    <property type="match status" value="1"/>
</dbReference>
<reference key="1">
    <citation type="journal article" date="2005" name="Proc. Natl. Acad. Sci. U.S.A.">
        <title>Whole genome sequence of Staphylococcus saprophyticus reveals the pathogenesis of uncomplicated urinary tract infection.</title>
        <authorList>
            <person name="Kuroda M."/>
            <person name="Yamashita A."/>
            <person name="Hirakawa H."/>
            <person name="Kumano M."/>
            <person name="Morikawa K."/>
            <person name="Higashide M."/>
            <person name="Maruyama A."/>
            <person name="Inose Y."/>
            <person name="Matoba K."/>
            <person name="Toh H."/>
            <person name="Kuhara S."/>
            <person name="Hattori M."/>
            <person name="Ohta T."/>
        </authorList>
    </citation>
    <scope>NUCLEOTIDE SEQUENCE [LARGE SCALE GENOMIC DNA]</scope>
    <source>
        <strain>ATCC 15305 / DSM 20229 / NCIMB 8711 / NCTC 7292 / S-41</strain>
    </source>
</reference>
<comment type="function">
    <text evidence="1">Catalyzes the GTP-dependent ribosomal translocation step during translation elongation. During this step, the ribosome changes from the pre-translocational (PRE) to the post-translocational (POST) state as the newly formed A-site-bound peptidyl-tRNA and P-site-bound deacylated tRNA move to the P and E sites, respectively. Catalyzes the coordinated movement of the two tRNA molecules, the mRNA and conformational changes in the ribosome.</text>
</comment>
<comment type="subcellular location">
    <subcellularLocation>
        <location evidence="1">Cytoplasm</location>
    </subcellularLocation>
</comment>
<comment type="similarity">
    <text evidence="1">Belongs to the TRAFAC class translation factor GTPase superfamily. Classic translation factor GTPase family. EF-G/EF-2 subfamily.</text>
</comment>
<accession>Q49V57</accession>
<proteinExistence type="inferred from homology"/>
<organism>
    <name type="scientific">Staphylococcus saprophyticus subsp. saprophyticus (strain ATCC 15305 / DSM 20229 / NCIMB 8711 / NCTC 7292 / S-41)</name>
    <dbReference type="NCBI Taxonomy" id="342451"/>
    <lineage>
        <taxon>Bacteria</taxon>
        <taxon>Bacillati</taxon>
        <taxon>Bacillota</taxon>
        <taxon>Bacilli</taxon>
        <taxon>Bacillales</taxon>
        <taxon>Staphylococcaceae</taxon>
        <taxon>Staphylococcus</taxon>
    </lineage>
</organism>
<sequence length="696" mass="76977">MARDFSLDRTRNIGIMAHIDAGKTTTTERILYYTGRIHKIGETHEGASQMDWMEQEQDRGITITSAATTAEWDNHRVNIIDTPGHVDFTVEVERSLRVLDGAVTVLDAQSGVEPQTETVWRQATTYGVPRIVFVNKMDKLGANFEYSVSTIHDRLQANAQPIQLPIGAEDEFEAIIDLVEMTCFKYTNDLGTEIEEIEIPEDHKERAEEARAALVEAVAETDDELMEKYLGDEEISIPELKAAIRKATTDVEFYPVLVGTAFKNKGVQLMLNAVIDYLPSPLDVKPIIGHRADNPDEEVIAKADDNAEFAALAFKVMTDPYVGKLTFFRVYSGTLSSGSYVKNSTKNKRERVGRLLQMHANSRQELNTVYSGDIAAAVGLKDTGTGDTLCGEKNDIILESMDFPEPVIHLSVEPKSKADQDKMTTALVKLQEEDPTFHAHTDDETGQVIIGGMGELHLDILVDRMKKEFNVECNVGAPMVSYRETFKSSAEVQGKFARQSGGRGQYGDVKIEFSPNETGGGFEFENAIVGGVVPREYIPSVEAGLKDSMENGVLAGYPLIDVKARLFDGSYHDVDSSEMAFKVAASLALKEAAKKCDPVILEPMMKVTIEMPEEYMGDIMGDVTSRRGRVDGMEPRGNAQVVNAYVPLSEMFGYATSLRSNTQGRGTYTMYFDHYAEVPKSIAEDIIKKNSGNKAE</sequence>